<sequence>MSKITKVFAREILDSRGNPTIQVDVYTLAGGFGSAIVPSGASTGSREALELRDTNTKYADNWYGQKGVMTAVDNVNNIIAPEIIGLCCKNQRLIDQKMIELDGTPNKEKLGANAILGVSLAVAKAAANELRMPLFRYLGGTNPTLMPVPMLNVINGGEHASNTLDFQEFMIMPLGFRTFKEALQAANKVFHNLAKLLKKSGFETQVGDEGGFAPNFNSHEQALDFLVDAIKESGFNPGFKGENAVAIAIDAAASEFYNGQKYVFKKLKSASLNKNQADLDEKFEFNSEELLNYYGQLLAKYPIISIEDGFAESDWQGFIAFNQKYGNNHQIVGDDLTVTNVEILKKAINLKAINSILIKLNQIGTLSETLDAIHLAQKSGMTAVISHRSGESEDTTIADLAVAVSSGQIKTGSLSRTDRIAKYNRLLVIEEYLNSYAKADYIGREVFYNLK</sequence>
<evidence type="ECO:0000255" key="1">
    <source>
        <dbReference type="HAMAP-Rule" id="MF_00318"/>
    </source>
</evidence>
<name>ENO_MESHJ</name>
<dbReference type="EC" id="4.2.1.11" evidence="1"/>
<dbReference type="EMBL" id="AE017243">
    <property type="protein sequence ID" value="AAZ44333.1"/>
    <property type="molecule type" value="Genomic_DNA"/>
</dbReference>
<dbReference type="RefSeq" id="WP_011284024.1">
    <property type="nucleotide sequence ID" value="NC_007295.1"/>
</dbReference>
<dbReference type="SMR" id="Q4AA88"/>
<dbReference type="GeneID" id="41334548"/>
<dbReference type="KEGG" id="mhj:MHJ_0242"/>
<dbReference type="eggNOG" id="COG0148">
    <property type="taxonomic scope" value="Bacteria"/>
</dbReference>
<dbReference type="HOGENOM" id="CLU_031223_2_1_14"/>
<dbReference type="OrthoDB" id="9804716at2"/>
<dbReference type="UniPathway" id="UPA00109">
    <property type="reaction ID" value="UER00187"/>
</dbReference>
<dbReference type="Proteomes" id="UP000000548">
    <property type="component" value="Chromosome"/>
</dbReference>
<dbReference type="GO" id="GO:0009986">
    <property type="term" value="C:cell surface"/>
    <property type="evidence" value="ECO:0007669"/>
    <property type="project" value="UniProtKB-SubCell"/>
</dbReference>
<dbReference type="GO" id="GO:0005576">
    <property type="term" value="C:extracellular region"/>
    <property type="evidence" value="ECO:0007669"/>
    <property type="project" value="UniProtKB-SubCell"/>
</dbReference>
<dbReference type="GO" id="GO:0000015">
    <property type="term" value="C:phosphopyruvate hydratase complex"/>
    <property type="evidence" value="ECO:0007669"/>
    <property type="project" value="InterPro"/>
</dbReference>
<dbReference type="GO" id="GO:0000287">
    <property type="term" value="F:magnesium ion binding"/>
    <property type="evidence" value="ECO:0007669"/>
    <property type="project" value="UniProtKB-UniRule"/>
</dbReference>
<dbReference type="GO" id="GO:0004634">
    <property type="term" value="F:phosphopyruvate hydratase activity"/>
    <property type="evidence" value="ECO:0007669"/>
    <property type="project" value="UniProtKB-UniRule"/>
</dbReference>
<dbReference type="GO" id="GO:0006096">
    <property type="term" value="P:glycolytic process"/>
    <property type="evidence" value="ECO:0007669"/>
    <property type="project" value="UniProtKB-UniRule"/>
</dbReference>
<dbReference type="CDD" id="cd03313">
    <property type="entry name" value="enolase"/>
    <property type="match status" value="1"/>
</dbReference>
<dbReference type="FunFam" id="3.30.390.10:FF:000001">
    <property type="entry name" value="Enolase"/>
    <property type="match status" value="1"/>
</dbReference>
<dbReference type="Gene3D" id="3.20.20.120">
    <property type="entry name" value="Enolase-like C-terminal domain"/>
    <property type="match status" value="1"/>
</dbReference>
<dbReference type="Gene3D" id="3.30.390.10">
    <property type="entry name" value="Enolase-like, N-terminal domain"/>
    <property type="match status" value="1"/>
</dbReference>
<dbReference type="HAMAP" id="MF_00318">
    <property type="entry name" value="Enolase"/>
    <property type="match status" value="1"/>
</dbReference>
<dbReference type="InterPro" id="IPR000941">
    <property type="entry name" value="Enolase"/>
</dbReference>
<dbReference type="InterPro" id="IPR036849">
    <property type="entry name" value="Enolase-like_C_sf"/>
</dbReference>
<dbReference type="InterPro" id="IPR029017">
    <property type="entry name" value="Enolase-like_N"/>
</dbReference>
<dbReference type="InterPro" id="IPR020810">
    <property type="entry name" value="Enolase_C"/>
</dbReference>
<dbReference type="InterPro" id="IPR020809">
    <property type="entry name" value="Enolase_CS"/>
</dbReference>
<dbReference type="InterPro" id="IPR020811">
    <property type="entry name" value="Enolase_N"/>
</dbReference>
<dbReference type="NCBIfam" id="TIGR01060">
    <property type="entry name" value="eno"/>
    <property type="match status" value="1"/>
</dbReference>
<dbReference type="PANTHER" id="PTHR11902">
    <property type="entry name" value="ENOLASE"/>
    <property type="match status" value="1"/>
</dbReference>
<dbReference type="PANTHER" id="PTHR11902:SF1">
    <property type="entry name" value="ENOLASE"/>
    <property type="match status" value="1"/>
</dbReference>
<dbReference type="Pfam" id="PF00113">
    <property type="entry name" value="Enolase_C"/>
    <property type="match status" value="1"/>
</dbReference>
<dbReference type="Pfam" id="PF03952">
    <property type="entry name" value="Enolase_N"/>
    <property type="match status" value="1"/>
</dbReference>
<dbReference type="PIRSF" id="PIRSF001400">
    <property type="entry name" value="Enolase"/>
    <property type="match status" value="1"/>
</dbReference>
<dbReference type="PRINTS" id="PR00148">
    <property type="entry name" value="ENOLASE"/>
</dbReference>
<dbReference type="SFLD" id="SFLDS00001">
    <property type="entry name" value="Enolase"/>
    <property type="match status" value="1"/>
</dbReference>
<dbReference type="SFLD" id="SFLDF00002">
    <property type="entry name" value="enolase"/>
    <property type="match status" value="1"/>
</dbReference>
<dbReference type="SMART" id="SM01192">
    <property type="entry name" value="Enolase_C"/>
    <property type="match status" value="1"/>
</dbReference>
<dbReference type="SMART" id="SM01193">
    <property type="entry name" value="Enolase_N"/>
    <property type="match status" value="1"/>
</dbReference>
<dbReference type="SUPFAM" id="SSF51604">
    <property type="entry name" value="Enolase C-terminal domain-like"/>
    <property type="match status" value="1"/>
</dbReference>
<dbReference type="SUPFAM" id="SSF54826">
    <property type="entry name" value="Enolase N-terminal domain-like"/>
    <property type="match status" value="1"/>
</dbReference>
<dbReference type="PROSITE" id="PS00164">
    <property type="entry name" value="ENOLASE"/>
    <property type="match status" value="1"/>
</dbReference>
<feature type="chain" id="PRO_0000267059" description="Enolase">
    <location>
        <begin position="1"/>
        <end position="451"/>
    </location>
</feature>
<feature type="active site" description="Proton donor" evidence="1">
    <location>
        <position position="209"/>
    </location>
</feature>
<feature type="active site" description="Proton acceptor" evidence="1">
    <location>
        <position position="359"/>
    </location>
</feature>
<feature type="binding site" evidence="1">
    <location>
        <position position="167"/>
    </location>
    <ligand>
        <name>(2R)-2-phosphoglycerate</name>
        <dbReference type="ChEBI" id="CHEBI:58289"/>
    </ligand>
</feature>
<feature type="binding site" evidence="1">
    <location>
        <position position="250"/>
    </location>
    <ligand>
        <name>Mg(2+)</name>
        <dbReference type="ChEBI" id="CHEBI:18420"/>
    </ligand>
</feature>
<feature type="binding site" evidence="1">
    <location>
        <position position="307"/>
    </location>
    <ligand>
        <name>Mg(2+)</name>
        <dbReference type="ChEBI" id="CHEBI:18420"/>
    </ligand>
</feature>
<feature type="binding site" evidence="1">
    <location>
        <position position="334"/>
    </location>
    <ligand>
        <name>Mg(2+)</name>
        <dbReference type="ChEBI" id="CHEBI:18420"/>
    </ligand>
</feature>
<feature type="binding site" evidence="1">
    <location>
        <position position="359"/>
    </location>
    <ligand>
        <name>(2R)-2-phosphoglycerate</name>
        <dbReference type="ChEBI" id="CHEBI:58289"/>
    </ligand>
</feature>
<feature type="binding site" evidence="1">
    <location>
        <position position="388"/>
    </location>
    <ligand>
        <name>(2R)-2-phosphoglycerate</name>
        <dbReference type="ChEBI" id="CHEBI:58289"/>
    </ligand>
</feature>
<feature type="binding site" evidence="1">
    <location>
        <position position="389"/>
    </location>
    <ligand>
        <name>(2R)-2-phosphoglycerate</name>
        <dbReference type="ChEBI" id="CHEBI:58289"/>
    </ligand>
</feature>
<feature type="binding site" evidence="1">
    <location>
        <position position="410"/>
    </location>
    <ligand>
        <name>(2R)-2-phosphoglycerate</name>
        <dbReference type="ChEBI" id="CHEBI:58289"/>
    </ligand>
</feature>
<comment type="function">
    <text evidence="1">Catalyzes the reversible conversion of 2-phosphoglycerate (2-PG) into phosphoenolpyruvate (PEP). It is essential for the degradation of carbohydrates via glycolysis.</text>
</comment>
<comment type="catalytic activity">
    <reaction evidence="1">
        <text>(2R)-2-phosphoglycerate = phosphoenolpyruvate + H2O</text>
        <dbReference type="Rhea" id="RHEA:10164"/>
        <dbReference type="ChEBI" id="CHEBI:15377"/>
        <dbReference type="ChEBI" id="CHEBI:58289"/>
        <dbReference type="ChEBI" id="CHEBI:58702"/>
        <dbReference type="EC" id="4.2.1.11"/>
    </reaction>
</comment>
<comment type="cofactor">
    <cofactor evidence="1">
        <name>Mg(2+)</name>
        <dbReference type="ChEBI" id="CHEBI:18420"/>
    </cofactor>
    <text evidence="1">Binds a second Mg(2+) ion via substrate during catalysis.</text>
</comment>
<comment type="pathway">
    <text evidence="1">Carbohydrate degradation; glycolysis; pyruvate from D-glyceraldehyde 3-phosphate: step 4/5.</text>
</comment>
<comment type="subcellular location">
    <subcellularLocation>
        <location evidence="1">Cytoplasm</location>
    </subcellularLocation>
    <subcellularLocation>
        <location evidence="1">Secreted</location>
    </subcellularLocation>
    <subcellularLocation>
        <location evidence="1">Cell surface</location>
    </subcellularLocation>
    <text evidence="1">Fractions of enolase are present in both the cytoplasm and on the cell surface.</text>
</comment>
<comment type="similarity">
    <text evidence="1">Belongs to the enolase family.</text>
</comment>
<organism>
    <name type="scientific">Mesomycoplasma hyopneumoniae (strain J / ATCC 25934 / NCTC 10110)</name>
    <name type="common">Mycoplasma hyopneumoniae</name>
    <dbReference type="NCBI Taxonomy" id="262719"/>
    <lineage>
        <taxon>Bacteria</taxon>
        <taxon>Bacillati</taxon>
        <taxon>Mycoplasmatota</taxon>
        <taxon>Mycoplasmoidales</taxon>
        <taxon>Metamycoplasmataceae</taxon>
        <taxon>Mesomycoplasma</taxon>
    </lineage>
</organism>
<keyword id="KW-0963">Cytoplasm</keyword>
<keyword id="KW-0324">Glycolysis</keyword>
<keyword id="KW-0456">Lyase</keyword>
<keyword id="KW-0460">Magnesium</keyword>
<keyword id="KW-0479">Metal-binding</keyword>
<keyword id="KW-0964">Secreted</keyword>
<reference key="1">
    <citation type="journal article" date="2005" name="J. Bacteriol.">
        <title>Swine and poultry pathogens: the complete genome sequences of two strains of Mycoplasma hyopneumoniae and a strain of Mycoplasma synoviae.</title>
        <authorList>
            <person name="Vasconcelos A.T.R."/>
            <person name="Ferreira H.B."/>
            <person name="Bizarro C.V."/>
            <person name="Bonatto S.L."/>
            <person name="Carvalho M.O."/>
            <person name="Pinto P.M."/>
            <person name="Almeida D.F."/>
            <person name="Almeida L.G.P."/>
            <person name="Almeida R."/>
            <person name="Alves-Junior L."/>
            <person name="Assuncao E.N."/>
            <person name="Azevedo V.A.C."/>
            <person name="Bogo M.R."/>
            <person name="Brigido M.M."/>
            <person name="Brocchi M."/>
            <person name="Burity H.A."/>
            <person name="Camargo A.A."/>
            <person name="Camargo S.S."/>
            <person name="Carepo M.S."/>
            <person name="Carraro D.M."/>
            <person name="de Mattos Cascardo J.C."/>
            <person name="Castro L.A."/>
            <person name="Cavalcanti G."/>
            <person name="Chemale G."/>
            <person name="Collevatti R.G."/>
            <person name="Cunha C.W."/>
            <person name="Dallagiovanna B."/>
            <person name="Dambros B.P."/>
            <person name="Dellagostin O.A."/>
            <person name="Falcao C."/>
            <person name="Fantinatti-Garboggini F."/>
            <person name="Felipe M.S.S."/>
            <person name="Fiorentin L."/>
            <person name="Franco G.R."/>
            <person name="Freitas N.S.A."/>
            <person name="Frias D."/>
            <person name="Grangeiro T.B."/>
            <person name="Grisard E.C."/>
            <person name="Guimaraes C.T."/>
            <person name="Hungria M."/>
            <person name="Jardim S.N."/>
            <person name="Krieger M.A."/>
            <person name="Laurino J.P."/>
            <person name="Lima L.F.A."/>
            <person name="Lopes M.I."/>
            <person name="Loreto E.L.S."/>
            <person name="Madeira H.M.F."/>
            <person name="Manfio G.P."/>
            <person name="Maranhao A.Q."/>
            <person name="Martinkovics C.T."/>
            <person name="Medeiros S.R.B."/>
            <person name="Moreira M.A.M."/>
            <person name="Neiva M."/>
            <person name="Ramalho-Neto C.E."/>
            <person name="Nicolas M.F."/>
            <person name="Oliveira S.C."/>
            <person name="Paixao R.F.C."/>
            <person name="Pedrosa F.O."/>
            <person name="Pena S.D.J."/>
            <person name="Pereira M."/>
            <person name="Pereira-Ferrari L."/>
            <person name="Piffer I."/>
            <person name="Pinto L.S."/>
            <person name="Potrich D.P."/>
            <person name="Salim A.C.M."/>
            <person name="Santos F.R."/>
            <person name="Schmitt R."/>
            <person name="Schneider M.P.C."/>
            <person name="Schrank A."/>
            <person name="Schrank I.S."/>
            <person name="Schuck A.F."/>
            <person name="Seuanez H.N."/>
            <person name="Silva D.W."/>
            <person name="Silva R."/>
            <person name="Silva S.C."/>
            <person name="Soares C.M.A."/>
            <person name="Souza K.R.L."/>
            <person name="Souza R.C."/>
            <person name="Staats C.C."/>
            <person name="Steffens M.B.R."/>
            <person name="Teixeira S.M.R."/>
            <person name="Urmenyi T.P."/>
            <person name="Vainstein M.H."/>
            <person name="Zuccherato L.W."/>
            <person name="Simpson A.J.G."/>
            <person name="Zaha A."/>
        </authorList>
    </citation>
    <scope>NUCLEOTIDE SEQUENCE [LARGE SCALE GENOMIC DNA]</scope>
    <source>
        <strain>J / ATCC 25934 / NCTC 10110</strain>
    </source>
</reference>
<gene>
    <name evidence="1" type="primary">eno</name>
    <name type="ordered locus">MHJ_0242</name>
</gene>
<accession>Q4AA88</accession>
<protein>
    <recommendedName>
        <fullName evidence="1">Enolase</fullName>
        <ecNumber evidence="1">4.2.1.11</ecNumber>
    </recommendedName>
    <alternativeName>
        <fullName evidence="1">2-phospho-D-glycerate hydro-lyase</fullName>
    </alternativeName>
    <alternativeName>
        <fullName evidence="1">2-phosphoglycerate dehydratase</fullName>
    </alternativeName>
</protein>
<proteinExistence type="inferred from homology"/>